<organism>
    <name type="scientific">Bacillus thuringiensis subsp. konkukian (strain 97-27)</name>
    <dbReference type="NCBI Taxonomy" id="281309"/>
    <lineage>
        <taxon>Bacteria</taxon>
        <taxon>Bacillati</taxon>
        <taxon>Bacillota</taxon>
        <taxon>Bacilli</taxon>
        <taxon>Bacillales</taxon>
        <taxon>Bacillaceae</taxon>
        <taxon>Bacillus</taxon>
        <taxon>Bacillus cereus group</taxon>
    </lineage>
</organism>
<evidence type="ECO:0000255" key="1">
    <source>
        <dbReference type="HAMAP-Rule" id="MF_00123"/>
    </source>
</evidence>
<comment type="catalytic activity">
    <reaction evidence="1">
        <text>tRNA(Arg) + L-arginine + ATP = L-arginyl-tRNA(Arg) + AMP + diphosphate</text>
        <dbReference type="Rhea" id="RHEA:20301"/>
        <dbReference type="Rhea" id="RHEA-COMP:9658"/>
        <dbReference type="Rhea" id="RHEA-COMP:9673"/>
        <dbReference type="ChEBI" id="CHEBI:30616"/>
        <dbReference type="ChEBI" id="CHEBI:32682"/>
        <dbReference type="ChEBI" id="CHEBI:33019"/>
        <dbReference type="ChEBI" id="CHEBI:78442"/>
        <dbReference type="ChEBI" id="CHEBI:78513"/>
        <dbReference type="ChEBI" id="CHEBI:456215"/>
        <dbReference type="EC" id="6.1.1.19"/>
    </reaction>
</comment>
<comment type="subunit">
    <text evidence="1">Monomer.</text>
</comment>
<comment type="subcellular location">
    <subcellularLocation>
        <location evidence="1">Cytoplasm</location>
    </subcellularLocation>
</comment>
<comment type="similarity">
    <text evidence="1">Belongs to the class-I aminoacyl-tRNA synthetase family.</text>
</comment>
<dbReference type="EC" id="6.1.1.19" evidence="1"/>
<dbReference type="EMBL" id="AE017355">
    <property type="protein sequence ID" value="AAT59740.1"/>
    <property type="molecule type" value="Genomic_DNA"/>
</dbReference>
<dbReference type="RefSeq" id="YP_036321.1">
    <property type="nucleotide sequence ID" value="NC_005957.1"/>
</dbReference>
<dbReference type="SMR" id="Q6HJF5"/>
<dbReference type="KEGG" id="btk:BT9727_1992"/>
<dbReference type="PATRIC" id="fig|281309.8.peg.2096"/>
<dbReference type="HOGENOM" id="CLU_006406_6_1_9"/>
<dbReference type="Proteomes" id="UP000001301">
    <property type="component" value="Chromosome"/>
</dbReference>
<dbReference type="GO" id="GO:0005737">
    <property type="term" value="C:cytoplasm"/>
    <property type="evidence" value="ECO:0007669"/>
    <property type="project" value="UniProtKB-SubCell"/>
</dbReference>
<dbReference type="GO" id="GO:0004814">
    <property type="term" value="F:arginine-tRNA ligase activity"/>
    <property type="evidence" value="ECO:0007669"/>
    <property type="project" value="UniProtKB-UniRule"/>
</dbReference>
<dbReference type="GO" id="GO:0005524">
    <property type="term" value="F:ATP binding"/>
    <property type="evidence" value="ECO:0007669"/>
    <property type="project" value="UniProtKB-UniRule"/>
</dbReference>
<dbReference type="GO" id="GO:0006420">
    <property type="term" value="P:arginyl-tRNA aminoacylation"/>
    <property type="evidence" value="ECO:0007669"/>
    <property type="project" value="UniProtKB-UniRule"/>
</dbReference>
<dbReference type="CDD" id="cd07956">
    <property type="entry name" value="Anticodon_Ia_Arg"/>
    <property type="match status" value="1"/>
</dbReference>
<dbReference type="CDD" id="cd00671">
    <property type="entry name" value="ArgRS_core"/>
    <property type="match status" value="1"/>
</dbReference>
<dbReference type="FunFam" id="3.40.50.620:FF:000116">
    <property type="entry name" value="Arginine--tRNA ligase"/>
    <property type="match status" value="1"/>
</dbReference>
<dbReference type="FunFam" id="1.10.730.10:FF:000006">
    <property type="entry name" value="Arginyl-tRNA synthetase 2, mitochondrial"/>
    <property type="match status" value="1"/>
</dbReference>
<dbReference type="Gene3D" id="3.30.1360.70">
    <property type="entry name" value="Arginyl tRNA synthetase N-terminal domain"/>
    <property type="match status" value="1"/>
</dbReference>
<dbReference type="Gene3D" id="3.40.50.620">
    <property type="entry name" value="HUPs"/>
    <property type="match status" value="1"/>
</dbReference>
<dbReference type="Gene3D" id="1.10.730.10">
    <property type="entry name" value="Isoleucyl-tRNA Synthetase, Domain 1"/>
    <property type="match status" value="1"/>
</dbReference>
<dbReference type="HAMAP" id="MF_00123">
    <property type="entry name" value="Arg_tRNA_synth"/>
    <property type="match status" value="1"/>
</dbReference>
<dbReference type="InterPro" id="IPR001278">
    <property type="entry name" value="Arg-tRNA-ligase"/>
</dbReference>
<dbReference type="InterPro" id="IPR005148">
    <property type="entry name" value="Arg-tRNA-synth_N"/>
</dbReference>
<dbReference type="InterPro" id="IPR036695">
    <property type="entry name" value="Arg-tRNA-synth_N_sf"/>
</dbReference>
<dbReference type="InterPro" id="IPR035684">
    <property type="entry name" value="ArgRS_core"/>
</dbReference>
<dbReference type="InterPro" id="IPR008909">
    <property type="entry name" value="DALR_anticod-bd"/>
</dbReference>
<dbReference type="InterPro" id="IPR014729">
    <property type="entry name" value="Rossmann-like_a/b/a_fold"/>
</dbReference>
<dbReference type="InterPro" id="IPR009080">
    <property type="entry name" value="tRNAsynth_Ia_anticodon-bd"/>
</dbReference>
<dbReference type="NCBIfam" id="TIGR00456">
    <property type="entry name" value="argS"/>
    <property type="match status" value="1"/>
</dbReference>
<dbReference type="PANTHER" id="PTHR11956:SF5">
    <property type="entry name" value="ARGININE--TRNA LIGASE, CYTOPLASMIC"/>
    <property type="match status" value="1"/>
</dbReference>
<dbReference type="PANTHER" id="PTHR11956">
    <property type="entry name" value="ARGINYL-TRNA SYNTHETASE"/>
    <property type="match status" value="1"/>
</dbReference>
<dbReference type="Pfam" id="PF03485">
    <property type="entry name" value="Arg_tRNA_synt_N"/>
    <property type="match status" value="1"/>
</dbReference>
<dbReference type="Pfam" id="PF05746">
    <property type="entry name" value="DALR_1"/>
    <property type="match status" value="1"/>
</dbReference>
<dbReference type="Pfam" id="PF00750">
    <property type="entry name" value="tRNA-synt_1d"/>
    <property type="match status" value="1"/>
</dbReference>
<dbReference type="PRINTS" id="PR01038">
    <property type="entry name" value="TRNASYNTHARG"/>
</dbReference>
<dbReference type="SMART" id="SM01016">
    <property type="entry name" value="Arg_tRNA_synt_N"/>
    <property type="match status" value="1"/>
</dbReference>
<dbReference type="SMART" id="SM00836">
    <property type="entry name" value="DALR_1"/>
    <property type="match status" value="1"/>
</dbReference>
<dbReference type="SUPFAM" id="SSF47323">
    <property type="entry name" value="Anticodon-binding domain of a subclass of class I aminoacyl-tRNA synthetases"/>
    <property type="match status" value="1"/>
</dbReference>
<dbReference type="SUPFAM" id="SSF55190">
    <property type="entry name" value="Arginyl-tRNA synthetase (ArgRS), N-terminal 'additional' domain"/>
    <property type="match status" value="1"/>
</dbReference>
<dbReference type="SUPFAM" id="SSF52374">
    <property type="entry name" value="Nucleotidylyl transferase"/>
    <property type="match status" value="1"/>
</dbReference>
<sequence>MDYKMHFAESLSNIFTNELTQKQILDLIESPKQDEFGDAAFPCFSLAKQYKKAPAIIAKEVAQKLSDPFFTKVEAVGPYVNVFFNRETVSDTVLKTILAEKEEYGHNHFGYEKTVVIDYSSPNIAKPFSMGHLRSTMIGNSLKHIAEKCGYEVVGINYIGDWGTQFGKLITAYKKWGNEAVVKEDPIRELFKLYVQFHEEVTDDEELEEEGRAWFKKLEEGDEEAVELWNWFRHESLKEFSRIYELLGVEFTNFQGEAFYNNLMEDFIGILEEHDLLEESEGALVVNLEEEGMPPCLIRKSDGATIYATRDLTAALYRQNTFGFDKALYVVGPEQSLHFNQFFTVLKKLGYTWVDGMEHVPFGFILKDGKKMSTRKGRIILLEEVLEEAIELAKQNIEEKNPNLKQKDEVAKQVGAGAVIFHDLKNERMHNIEFSLENMLKFEGETGPYVQYTHARACSILRKESVEFETCTFTLKDDHSWNIVKLLNKFPKVIEAACNKNEPSVISKYVLDVAQSFNKYYGNVRILDENAEKDSRLALVYAVTVVLKEGLRLLGVEAPEEM</sequence>
<protein>
    <recommendedName>
        <fullName evidence="1">Arginine--tRNA ligase 1</fullName>
        <ecNumber evidence="1">6.1.1.19</ecNumber>
    </recommendedName>
    <alternativeName>
        <fullName evidence="1">Arginyl-tRNA synthetase 1</fullName>
        <shortName evidence="1">ArgRS 1</shortName>
    </alternativeName>
</protein>
<name>SYR1_BACHK</name>
<keyword id="KW-0030">Aminoacyl-tRNA synthetase</keyword>
<keyword id="KW-0067">ATP-binding</keyword>
<keyword id="KW-0963">Cytoplasm</keyword>
<keyword id="KW-0436">Ligase</keyword>
<keyword id="KW-0547">Nucleotide-binding</keyword>
<keyword id="KW-0648">Protein biosynthesis</keyword>
<proteinExistence type="inferred from homology"/>
<reference key="1">
    <citation type="journal article" date="2006" name="J. Bacteriol.">
        <title>Pathogenomic sequence analysis of Bacillus cereus and Bacillus thuringiensis isolates closely related to Bacillus anthracis.</title>
        <authorList>
            <person name="Han C.S."/>
            <person name="Xie G."/>
            <person name="Challacombe J.F."/>
            <person name="Altherr M.R."/>
            <person name="Bhotika S.S."/>
            <person name="Bruce D."/>
            <person name="Campbell C.S."/>
            <person name="Campbell M.L."/>
            <person name="Chen J."/>
            <person name="Chertkov O."/>
            <person name="Cleland C."/>
            <person name="Dimitrijevic M."/>
            <person name="Doggett N.A."/>
            <person name="Fawcett J.J."/>
            <person name="Glavina T."/>
            <person name="Goodwin L.A."/>
            <person name="Hill K.K."/>
            <person name="Hitchcock P."/>
            <person name="Jackson P.J."/>
            <person name="Keim P."/>
            <person name="Kewalramani A.R."/>
            <person name="Longmire J."/>
            <person name="Lucas S."/>
            <person name="Malfatti S."/>
            <person name="McMurry K."/>
            <person name="Meincke L.J."/>
            <person name="Misra M."/>
            <person name="Moseman B.L."/>
            <person name="Mundt M."/>
            <person name="Munk A.C."/>
            <person name="Okinaka R.T."/>
            <person name="Parson-Quintana B."/>
            <person name="Reilly L.P."/>
            <person name="Richardson P."/>
            <person name="Robinson D.L."/>
            <person name="Rubin E."/>
            <person name="Saunders E."/>
            <person name="Tapia R."/>
            <person name="Tesmer J.G."/>
            <person name="Thayer N."/>
            <person name="Thompson L.S."/>
            <person name="Tice H."/>
            <person name="Ticknor L.O."/>
            <person name="Wills P.L."/>
            <person name="Brettin T.S."/>
            <person name="Gilna P."/>
        </authorList>
    </citation>
    <scope>NUCLEOTIDE SEQUENCE [LARGE SCALE GENOMIC DNA]</scope>
    <source>
        <strain>97-27</strain>
    </source>
</reference>
<gene>
    <name evidence="1" type="primary">argS1</name>
    <name type="ordered locus">BT9727_1992</name>
</gene>
<feature type="chain" id="PRO_0000241985" description="Arginine--tRNA ligase 1">
    <location>
        <begin position="1"/>
        <end position="562"/>
    </location>
</feature>
<feature type="short sequence motif" description="'HIGH' region">
    <location>
        <begin position="122"/>
        <end position="132"/>
    </location>
</feature>
<accession>Q6HJF5</accession>